<keyword id="KW-0880">Kelch repeat</keyword>
<keyword id="KW-1185">Reference proteome</keyword>
<keyword id="KW-0677">Repeat</keyword>
<gene>
    <name type="ordered locus">At1g12870</name>
    <name type="ORF">F13K23.13</name>
</gene>
<proteinExistence type="predicted"/>
<accession>Q9LPW2</accession>
<accession>F4HNZ0</accession>
<protein>
    <recommendedName>
        <fullName>Putative F-box/kelch-repeat protein At1g12870</fullName>
    </recommendedName>
</protein>
<dbReference type="EMBL" id="AC012187">
    <property type="protein sequence ID" value="AAF78503.1"/>
    <property type="status" value="ALT_SEQ"/>
    <property type="molecule type" value="Genomic_DNA"/>
</dbReference>
<dbReference type="EMBL" id="CP002684">
    <property type="protein sequence ID" value="AEE28941.1"/>
    <property type="molecule type" value="Genomic_DNA"/>
</dbReference>
<dbReference type="PIR" id="D86262">
    <property type="entry name" value="D86262"/>
</dbReference>
<dbReference type="RefSeq" id="NP_172747.1">
    <property type="nucleotide sequence ID" value="NM_101158.1"/>
</dbReference>
<dbReference type="FunCoup" id="Q9LPW2">
    <property type="interactions" value="3"/>
</dbReference>
<dbReference type="iPTMnet" id="Q9LPW2"/>
<dbReference type="PaxDb" id="3702-AT1G12870.1"/>
<dbReference type="EnsemblPlants" id="AT1G12870.1">
    <property type="protein sequence ID" value="AT1G12870.1"/>
    <property type="gene ID" value="AT1G12870"/>
</dbReference>
<dbReference type="GeneID" id="837844"/>
<dbReference type="Gramene" id="AT1G12870.1">
    <property type="protein sequence ID" value="AT1G12870.1"/>
    <property type="gene ID" value="AT1G12870"/>
</dbReference>
<dbReference type="KEGG" id="ath:AT1G12870"/>
<dbReference type="Araport" id="AT1G12870"/>
<dbReference type="TAIR" id="AT1G12870"/>
<dbReference type="HOGENOM" id="CLU_027176_1_2_1"/>
<dbReference type="InParanoid" id="Q9LPW2"/>
<dbReference type="OMA" id="WQETEQD"/>
<dbReference type="PRO" id="PR:Q9LPW2"/>
<dbReference type="Proteomes" id="UP000006548">
    <property type="component" value="Chromosome 1"/>
</dbReference>
<dbReference type="ExpressionAtlas" id="Q9LPW2">
    <property type="expression patterns" value="baseline and differential"/>
</dbReference>
<dbReference type="GO" id="GO:0000325">
    <property type="term" value="C:plant-type vacuole"/>
    <property type="evidence" value="ECO:0007005"/>
    <property type="project" value="TAIR"/>
</dbReference>
<dbReference type="CDD" id="cd22157">
    <property type="entry name" value="F-box_AtFBW1-like"/>
    <property type="match status" value="1"/>
</dbReference>
<dbReference type="FunFam" id="2.120.10.80:FF:000273">
    <property type="entry name" value="F-box/LRR-repeat/kelch-repeat protein At1g09650"/>
    <property type="match status" value="1"/>
</dbReference>
<dbReference type="Gene3D" id="1.20.1280.50">
    <property type="match status" value="1"/>
</dbReference>
<dbReference type="Gene3D" id="2.120.10.80">
    <property type="entry name" value="Kelch-type beta propeller"/>
    <property type="match status" value="1"/>
</dbReference>
<dbReference type="InterPro" id="IPR006527">
    <property type="entry name" value="F-box-assoc_dom_typ1"/>
</dbReference>
<dbReference type="InterPro" id="IPR017451">
    <property type="entry name" value="F-box-assoc_interact_dom"/>
</dbReference>
<dbReference type="InterPro" id="IPR036047">
    <property type="entry name" value="F-box-like_dom_sf"/>
</dbReference>
<dbReference type="InterPro" id="IPR001810">
    <property type="entry name" value="F-box_dom"/>
</dbReference>
<dbReference type="InterPro" id="IPR011043">
    <property type="entry name" value="Gal_Oxase/kelch_b-propeller"/>
</dbReference>
<dbReference type="InterPro" id="IPR015915">
    <property type="entry name" value="Kelch-typ_b-propeller"/>
</dbReference>
<dbReference type="InterPro" id="IPR050796">
    <property type="entry name" value="SCF_F-box_component"/>
</dbReference>
<dbReference type="NCBIfam" id="TIGR01640">
    <property type="entry name" value="F_box_assoc_1"/>
    <property type="match status" value="1"/>
</dbReference>
<dbReference type="PANTHER" id="PTHR31672">
    <property type="entry name" value="BNACNNG10540D PROTEIN"/>
    <property type="match status" value="1"/>
</dbReference>
<dbReference type="PANTHER" id="PTHR31672:SF13">
    <property type="entry name" value="F-BOX PROTEIN CPR30-LIKE"/>
    <property type="match status" value="1"/>
</dbReference>
<dbReference type="Pfam" id="PF00646">
    <property type="entry name" value="F-box"/>
    <property type="match status" value="1"/>
</dbReference>
<dbReference type="Pfam" id="PF07734">
    <property type="entry name" value="FBA_1"/>
    <property type="match status" value="1"/>
</dbReference>
<dbReference type="SMART" id="SM00256">
    <property type="entry name" value="FBOX"/>
    <property type="match status" value="1"/>
</dbReference>
<dbReference type="SUPFAM" id="SSF81383">
    <property type="entry name" value="F-box domain"/>
    <property type="match status" value="1"/>
</dbReference>
<dbReference type="SUPFAM" id="SSF50965">
    <property type="entry name" value="Galactose oxidase, central domain"/>
    <property type="match status" value="1"/>
</dbReference>
<dbReference type="PROSITE" id="PS50181">
    <property type="entry name" value="FBOX"/>
    <property type="match status" value="1"/>
</dbReference>
<comment type="sequence caution" evidence="2">
    <conflict type="erroneous gene model prediction">
        <sequence resource="EMBL-CDS" id="AAF78503"/>
    </conflict>
</comment>
<evidence type="ECO:0000255" key="1">
    <source>
        <dbReference type="PROSITE-ProRule" id="PRU00080"/>
    </source>
</evidence>
<evidence type="ECO:0000305" key="2"/>
<name>FBK2_ARATH</name>
<feature type="chain" id="PRO_0000283168" description="Putative F-box/kelch-repeat protein At1g12870">
    <location>
        <begin position="1"/>
        <end position="416"/>
    </location>
</feature>
<feature type="domain" description="F-box" evidence="1">
    <location>
        <begin position="27"/>
        <end position="76"/>
    </location>
</feature>
<feature type="repeat" description="Kelch 1">
    <location>
        <begin position="199"/>
        <end position="243"/>
    </location>
</feature>
<feature type="repeat" description="Kelch 2">
    <location>
        <begin position="297"/>
        <end position="341"/>
    </location>
</feature>
<reference key="1">
    <citation type="journal article" date="2000" name="Nature">
        <title>Sequence and analysis of chromosome 1 of the plant Arabidopsis thaliana.</title>
        <authorList>
            <person name="Theologis A."/>
            <person name="Ecker J.R."/>
            <person name="Palm C.J."/>
            <person name="Federspiel N.A."/>
            <person name="Kaul S."/>
            <person name="White O."/>
            <person name="Alonso J."/>
            <person name="Altafi H."/>
            <person name="Araujo R."/>
            <person name="Bowman C.L."/>
            <person name="Brooks S.Y."/>
            <person name="Buehler E."/>
            <person name="Chan A."/>
            <person name="Chao Q."/>
            <person name="Chen H."/>
            <person name="Cheuk R.F."/>
            <person name="Chin C.W."/>
            <person name="Chung M.K."/>
            <person name="Conn L."/>
            <person name="Conway A.B."/>
            <person name="Conway A.R."/>
            <person name="Creasy T.H."/>
            <person name="Dewar K."/>
            <person name="Dunn P."/>
            <person name="Etgu P."/>
            <person name="Feldblyum T.V."/>
            <person name="Feng J.-D."/>
            <person name="Fong B."/>
            <person name="Fujii C.Y."/>
            <person name="Gill J.E."/>
            <person name="Goldsmith A.D."/>
            <person name="Haas B."/>
            <person name="Hansen N.F."/>
            <person name="Hughes B."/>
            <person name="Huizar L."/>
            <person name="Hunter J.L."/>
            <person name="Jenkins J."/>
            <person name="Johnson-Hopson C."/>
            <person name="Khan S."/>
            <person name="Khaykin E."/>
            <person name="Kim C.J."/>
            <person name="Koo H.L."/>
            <person name="Kremenetskaia I."/>
            <person name="Kurtz D.B."/>
            <person name="Kwan A."/>
            <person name="Lam B."/>
            <person name="Langin-Hooper S."/>
            <person name="Lee A."/>
            <person name="Lee J.M."/>
            <person name="Lenz C.A."/>
            <person name="Li J.H."/>
            <person name="Li Y.-P."/>
            <person name="Lin X."/>
            <person name="Liu S.X."/>
            <person name="Liu Z.A."/>
            <person name="Luros J.S."/>
            <person name="Maiti R."/>
            <person name="Marziali A."/>
            <person name="Militscher J."/>
            <person name="Miranda M."/>
            <person name="Nguyen M."/>
            <person name="Nierman W.C."/>
            <person name="Osborne B.I."/>
            <person name="Pai G."/>
            <person name="Peterson J."/>
            <person name="Pham P.K."/>
            <person name="Rizzo M."/>
            <person name="Rooney T."/>
            <person name="Rowley D."/>
            <person name="Sakano H."/>
            <person name="Salzberg S.L."/>
            <person name="Schwartz J.R."/>
            <person name="Shinn P."/>
            <person name="Southwick A.M."/>
            <person name="Sun H."/>
            <person name="Tallon L.J."/>
            <person name="Tambunga G."/>
            <person name="Toriumi M.J."/>
            <person name="Town C.D."/>
            <person name="Utterback T."/>
            <person name="Van Aken S."/>
            <person name="Vaysberg M."/>
            <person name="Vysotskaia V.S."/>
            <person name="Walker M."/>
            <person name="Wu D."/>
            <person name="Yu G."/>
            <person name="Fraser C.M."/>
            <person name="Venter J.C."/>
            <person name="Davis R.W."/>
        </authorList>
    </citation>
    <scope>NUCLEOTIDE SEQUENCE [LARGE SCALE GENOMIC DNA]</scope>
    <source>
        <strain>cv. Columbia</strain>
    </source>
</reference>
<reference key="2">
    <citation type="journal article" date="2017" name="Plant J.">
        <title>Araport11: a complete reannotation of the Arabidopsis thaliana reference genome.</title>
        <authorList>
            <person name="Cheng C.Y."/>
            <person name="Krishnakumar V."/>
            <person name="Chan A.P."/>
            <person name="Thibaud-Nissen F."/>
            <person name="Schobel S."/>
            <person name="Town C.D."/>
        </authorList>
    </citation>
    <scope>GENOME REANNOTATION</scope>
    <source>
        <strain>cv. Columbia</strain>
    </source>
</reference>
<organism>
    <name type="scientific">Arabidopsis thaliana</name>
    <name type="common">Mouse-ear cress</name>
    <dbReference type="NCBI Taxonomy" id="3702"/>
    <lineage>
        <taxon>Eukaryota</taxon>
        <taxon>Viridiplantae</taxon>
        <taxon>Streptophyta</taxon>
        <taxon>Embryophyta</taxon>
        <taxon>Tracheophyta</taxon>
        <taxon>Spermatophyta</taxon>
        <taxon>Magnoliopsida</taxon>
        <taxon>eudicotyledons</taxon>
        <taxon>Gunneridae</taxon>
        <taxon>Pentapetalae</taxon>
        <taxon>rosids</taxon>
        <taxon>malvids</taxon>
        <taxon>Brassicales</taxon>
        <taxon>Brassicaceae</taxon>
        <taxon>Camelineae</taxon>
        <taxon>Arabidopsis</taxon>
    </lineage>
</organism>
<sequence>MVMDEEKQAIVSSSSSSQRKRRYKKLMIASSSLPDDVVEEIFLKLPVKALMRFKSLSKQWRSTLESCYFSQRHLKIAERSHVDHPKVMIITEKWNPDIEISFRTISLESVSFLSSALFNFPRGFHHPIYASESCDGIFCIHSPKTQDIYVVNPATRWFRQLPPARFQIFMHKLNPTLDTLRDMIPVNHLAFVKATDYKLVWLYNSDASRVTKCEVFDFKANAWRYLTCIPSYRIYHDQKPASANGTLYWFTETYNAEIKVIALDIHTEIFRLLPKPSLIASSEPSHIDMCIIDNSLCMYETEGDKKIIQEIWRLKSSEDAWEKIYTINLLSSSYCHFHVLDGYNLTRLCYWTQKDLVESSTPVAIYKDKKIILSHRYTCNLGKRLEVLELHAKLSNIPCPKASICKRDALLVHRAI</sequence>